<protein>
    <recommendedName>
        <fullName evidence="1">tRNA-specific 2-thiouridylase MnmA</fullName>
        <ecNumber evidence="1">2.8.1.13</ecNumber>
    </recommendedName>
</protein>
<evidence type="ECO:0000255" key="1">
    <source>
        <dbReference type="HAMAP-Rule" id="MF_00144"/>
    </source>
</evidence>
<dbReference type="EC" id="2.8.1.13" evidence="1"/>
<dbReference type="EMBL" id="CP000124">
    <property type="protein sequence ID" value="ABA49353.1"/>
    <property type="molecule type" value="Genomic_DNA"/>
</dbReference>
<dbReference type="RefSeq" id="WP_004527719.1">
    <property type="nucleotide sequence ID" value="NC_007434.1"/>
</dbReference>
<dbReference type="SMR" id="Q3JNT6"/>
<dbReference type="EnsemblBacteria" id="ABA49353">
    <property type="protein sequence ID" value="ABA49353"/>
    <property type="gene ID" value="BURPS1710b_3396"/>
</dbReference>
<dbReference type="GeneID" id="93061484"/>
<dbReference type="KEGG" id="bpm:BURPS1710b_3396"/>
<dbReference type="HOGENOM" id="CLU_035188_1_0_4"/>
<dbReference type="Proteomes" id="UP000002700">
    <property type="component" value="Chromosome I"/>
</dbReference>
<dbReference type="GO" id="GO:0005737">
    <property type="term" value="C:cytoplasm"/>
    <property type="evidence" value="ECO:0007669"/>
    <property type="project" value="UniProtKB-SubCell"/>
</dbReference>
<dbReference type="GO" id="GO:0005524">
    <property type="term" value="F:ATP binding"/>
    <property type="evidence" value="ECO:0007669"/>
    <property type="project" value="UniProtKB-KW"/>
</dbReference>
<dbReference type="GO" id="GO:0000049">
    <property type="term" value="F:tRNA binding"/>
    <property type="evidence" value="ECO:0007669"/>
    <property type="project" value="UniProtKB-KW"/>
</dbReference>
<dbReference type="GO" id="GO:0103016">
    <property type="term" value="F:tRNA-uridine 2-sulfurtransferase activity"/>
    <property type="evidence" value="ECO:0007669"/>
    <property type="project" value="UniProtKB-EC"/>
</dbReference>
<dbReference type="GO" id="GO:0002143">
    <property type="term" value="P:tRNA wobble position uridine thiolation"/>
    <property type="evidence" value="ECO:0007669"/>
    <property type="project" value="TreeGrafter"/>
</dbReference>
<dbReference type="CDD" id="cd01998">
    <property type="entry name" value="MnmA_TRMU-like"/>
    <property type="match status" value="1"/>
</dbReference>
<dbReference type="FunFam" id="2.30.30.280:FF:000001">
    <property type="entry name" value="tRNA-specific 2-thiouridylase MnmA"/>
    <property type="match status" value="1"/>
</dbReference>
<dbReference type="FunFam" id="2.40.30.10:FF:000023">
    <property type="entry name" value="tRNA-specific 2-thiouridylase MnmA"/>
    <property type="match status" value="1"/>
</dbReference>
<dbReference type="FunFam" id="3.40.50.620:FF:000004">
    <property type="entry name" value="tRNA-specific 2-thiouridylase MnmA"/>
    <property type="match status" value="1"/>
</dbReference>
<dbReference type="Gene3D" id="2.30.30.280">
    <property type="entry name" value="Adenine nucleotide alpha hydrolases-like domains"/>
    <property type="match status" value="1"/>
</dbReference>
<dbReference type="Gene3D" id="3.40.50.620">
    <property type="entry name" value="HUPs"/>
    <property type="match status" value="1"/>
</dbReference>
<dbReference type="Gene3D" id="2.40.30.10">
    <property type="entry name" value="Translation factors"/>
    <property type="match status" value="1"/>
</dbReference>
<dbReference type="HAMAP" id="MF_00144">
    <property type="entry name" value="tRNA_thiouridyl_MnmA"/>
    <property type="match status" value="1"/>
</dbReference>
<dbReference type="InterPro" id="IPR004506">
    <property type="entry name" value="MnmA-like"/>
</dbReference>
<dbReference type="InterPro" id="IPR046885">
    <property type="entry name" value="MnmA-like_C"/>
</dbReference>
<dbReference type="InterPro" id="IPR046884">
    <property type="entry name" value="MnmA-like_central"/>
</dbReference>
<dbReference type="InterPro" id="IPR023382">
    <property type="entry name" value="MnmA-like_central_sf"/>
</dbReference>
<dbReference type="InterPro" id="IPR014729">
    <property type="entry name" value="Rossmann-like_a/b/a_fold"/>
</dbReference>
<dbReference type="NCBIfam" id="NF001138">
    <property type="entry name" value="PRK00143.1"/>
    <property type="match status" value="1"/>
</dbReference>
<dbReference type="NCBIfam" id="TIGR00420">
    <property type="entry name" value="trmU"/>
    <property type="match status" value="1"/>
</dbReference>
<dbReference type="PANTHER" id="PTHR11933:SF5">
    <property type="entry name" value="MITOCHONDRIAL TRNA-SPECIFIC 2-THIOURIDYLASE 1"/>
    <property type="match status" value="1"/>
</dbReference>
<dbReference type="PANTHER" id="PTHR11933">
    <property type="entry name" value="TRNA 5-METHYLAMINOMETHYL-2-THIOURIDYLATE -METHYLTRANSFERASE"/>
    <property type="match status" value="1"/>
</dbReference>
<dbReference type="Pfam" id="PF03054">
    <property type="entry name" value="tRNA_Me_trans"/>
    <property type="match status" value="1"/>
</dbReference>
<dbReference type="Pfam" id="PF20258">
    <property type="entry name" value="tRNA_Me_trans_C"/>
    <property type="match status" value="1"/>
</dbReference>
<dbReference type="Pfam" id="PF20259">
    <property type="entry name" value="tRNA_Me_trans_M"/>
    <property type="match status" value="1"/>
</dbReference>
<dbReference type="SUPFAM" id="SSF52402">
    <property type="entry name" value="Adenine nucleotide alpha hydrolases-like"/>
    <property type="match status" value="1"/>
</dbReference>
<comment type="function">
    <text evidence="1">Catalyzes the 2-thiolation of uridine at the wobble position (U34) of tRNA, leading to the formation of s(2)U34.</text>
</comment>
<comment type="catalytic activity">
    <reaction evidence="1">
        <text>S-sulfanyl-L-cysteinyl-[protein] + uridine(34) in tRNA + AH2 + ATP = 2-thiouridine(34) in tRNA + L-cysteinyl-[protein] + A + AMP + diphosphate + H(+)</text>
        <dbReference type="Rhea" id="RHEA:47032"/>
        <dbReference type="Rhea" id="RHEA-COMP:10131"/>
        <dbReference type="Rhea" id="RHEA-COMP:11726"/>
        <dbReference type="Rhea" id="RHEA-COMP:11727"/>
        <dbReference type="Rhea" id="RHEA-COMP:11728"/>
        <dbReference type="ChEBI" id="CHEBI:13193"/>
        <dbReference type="ChEBI" id="CHEBI:15378"/>
        <dbReference type="ChEBI" id="CHEBI:17499"/>
        <dbReference type="ChEBI" id="CHEBI:29950"/>
        <dbReference type="ChEBI" id="CHEBI:30616"/>
        <dbReference type="ChEBI" id="CHEBI:33019"/>
        <dbReference type="ChEBI" id="CHEBI:61963"/>
        <dbReference type="ChEBI" id="CHEBI:65315"/>
        <dbReference type="ChEBI" id="CHEBI:87170"/>
        <dbReference type="ChEBI" id="CHEBI:456215"/>
        <dbReference type="EC" id="2.8.1.13"/>
    </reaction>
</comment>
<comment type="subcellular location">
    <subcellularLocation>
        <location evidence="1">Cytoplasm</location>
    </subcellularLocation>
</comment>
<comment type="similarity">
    <text evidence="1">Belongs to the MnmA/TRMU family.</text>
</comment>
<accession>Q3JNT6</accession>
<proteinExistence type="inferred from homology"/>
<feature type="chain" id="PRO_0000349561" description="tRNA-specific 2-thiouridylase MnmA">
    <location>
        <begin position="1"/>
        <end position="383"/>
    </location>
</feature>
<feature type="region of interest" description="Interaction with target base in tRNA" evidence="1">
    <location>
        <begin position="95"/>
        <end position="97"/>
    </location>
</feature>
<feature type="region of interest" description="Interaction with tRNA" evidence="1">
    <location>
        <begin position="146"/>
        <end position="148"/>
    </location>
</feature>
<feature type="region of interest" description="Interaction with tRNA" evidence="1">
    <location>
        <begin position="308"/>
        <end position="309"/>
    </location>
</feature>
<feature type="active site" description="Nucleophile" evidence="1">
    <location>
        <position position="100"/>
    </location>
</feature>
<feature type="active site" description="Cysteine persulfide intermediate" evidence="1">
    <location>
        <position position="196"/>
    </location>
</feature>
<feature type="binding site" evidence="1">
    <location>
        <begin position="9"/>
        <end position="16"/>
    </location>
    <ligand>
        <name>ATP</name>
        <dbReference type="ChEBI" id="CHEBI:30616"/>
    </ligand>
</feature>
<feature type="binding site" evidence="1">
    <location>
        <position position="35"/>
    </location>
    <ligand>
        <name>ATP</name>
        <dbReference type="ChEBI" id="CHEBI:30616"/>
    </ligand>
</feature>
<feature type="binding site" evidence="1">
    <location>
        <position position="124"/>
    </location>
    <ligand>
        <name>ATP</name>
        <dbReference type="ChEBI" id="CHEBI:30616"/>
    </ligand>
</feature>
<feature type="site" description="Interaction with tRNA" evidence="1">
    <location>
        <position position="125"/>
    </location>
</feature>
<feature type="site" description="Interaction with tRNA" evidence="1">
    <location>
        <position position="344"/>
    </location>
</feature>
<feature type="disulfide bond" description="Alternate" evidence="1">
    <location>
        <begin position="100"/>
        <end position="196"/>
    </location>
</feature>
<name>MNMA_BURP1</name>
<gene>
    <name evidence="1" type="primary">mnmA</name>
    <name type="ordered locus">BURPS1710b_3396</name>
</gene>
<organism>
    <name type="scientific">Burkholderia pseudomallei (strain 1710b)</name>
    <dbReference type="NCBI Taxonomy" id="320372"/>
    <lineage>
        <taxon>Bacteria</taxon>
        <taxon>Pseudomonadati</taxon>
        <taxon>Pseudomonadota</taxon>
        <taxon>Betaproteobacteria</taxon>
        <taxon>Burkholderiales</taxon>
        <taxon>Burkholderiaceae</taxon>
        <taxon>Burkholderia</taxon>
        <taxon>pseudomallei group</taxon>
    </lineage>
</organism>
<sequence length="383" mass="41829">MTKRRVVVGMSGGVDSSVTAWLLKEQGYDVVGLFMKNWEDDDDGEYCSTRQDWIDVVSVADLIGIDVEAVNFAAEYKDRVFAEFLREYSAGRTPNPDVLCNAEIKFKAFLDHAMSLGAQTIATGHYARVRERDGRFELLKAFDHTKDQSYFLHRLNQAQLSKTMFPLGEIPKTRVREIAAQIGLPNAKKKDSTGICFIGERPFRDFLNRYLPTKPGPMKTPDGKTVGKHIGLAFYTFGQRKGIGLGGSKDGSGEPWFVAAKDIASNTLYVVQGHDHPWLRSRELVAGNVSWVAGEPPADGARCGAKTRYRQADAPCAFGRAAQAGDERFSLVFDEPQWAVTPGQSAVLYDGDVCLGGGIIESAATGRAGTAPAGRAPALVEAR</sequence>
<keyword id="KW-0067">ATP-binding</keyword>
<keyword id="KW-0963">Cytoplasm</keyword>
<keyword id="KW-1015">Disulfide bond</keyword>
<keyword id="KW-0547">Nucleotide-binding</keyword>
<keyword id="KW-0694">RNA-binding</keyword>
<keyword id="KW-0808">Transferase</keyword>
<keyword id="KW-0819">tRNA processing</keyword>
<keyword id="KW-0820">tRNA-binding</keyword>
<reference key="1">
    <citation type="journal article" date="2010" name="Genome Biol. Evol.">
        <title>Continuing evolution of Burkholderia mallei through genome reduction and large-scale rearrangements.</title>
        <authorList>
            <person name="Losada L."/>
            <person name="Ronning C.M."/>
            <person name="DeShazer D."/>
            <person name="Woods D."/>
            <person name="Fedorova N."/>
            <person name="Kim H.S."/>
            <person name="Shabalina S.A."/>
            <person name="Pearson T.R."/>
            <person name="Brinkac L."/>
            <person name="Tan P."/>
            <person name="Nandi T."/>
            <person name="Crabtree J."/>
            <person name="Badger J."/>
            <person name="Beckstrom-Sternberg S."/>
            <person name="Saqib M."/>
            <person name="Schutzer S.E."/>
            <person name="Keim P."/>
            <person name="Nierman W.C."/>
        </authorList>
    </citation>
    <scope>NUCLEOTIDE SEQUENCE [LARGE SCALE GENOMIC DNA]</scope>
    <source>
        <strain>1710b</strain>
    </source>
</reference>